<dbReference type="PIR" id="JC2393">
    <property type="entry name" value="JC2393"/>
</dbReference>
<dbReference type="SMR" id="Q7LZI1"/>
<dbReference type="iPTMnet" id="Q7LZI1"/>
<dbReference type="GO" id="GO:0005576">
    <property type="term" value="C:extracellular region"/>
    <property type="evidence" value="ECO:0007669"/>
    <property type="project" value="UniProtKB-SubCell"/>
</dbReference>
<dbReference type="GO" id="GO:0019834">
    <property type="term" value="F:phospholipase A2 inhibitor activity"/>
    <property type="evidence" value="ECO:0007669"/>
    <property type="project" value="UniProtKB-KW"/>
</dbReference>
<dbReference type="CDD" id="cd23629">
    <property type="entry name" value="TFP_LU_ECD_PLIGA"/>
    <property type="match status" value="1"/>
</dbReference>
<dbReference type="Gene3D" id="2.10.60.10">
    <property type="entry name" value="CD59"/>
    <property type="match status" value="1"/>
</dbReference>
<dbReference type="InterPro" id="IPR050918">
    <property type="entry name" value="CNF-like_PLA2_Inhibitor"/>
</dbReference>
<dbReference type="InterPro" id="IPR016054">
    <property type="entry name" value="LY6_UPA_recep-like"/>
</dbReference>
<dbReference type="InterPro" id="IPR016338">
    <property type="entry name" value="PLipase_A2-inh_b-type"/>
</dbReference>
<dbReference type="InterPro" id="IPR004126">
    <property type="entry name" value="PLipase_A2_inh_N"/>
</dbReference>
<dbReference type="InterPro" id="IPR045860">
    <property type="entry name" value="Snake_toxin-like_sf"/>
</dbReference>
<dbReference type="PANTHER" id="PTHR20914">
    <property type="entry name" value="LY6/PLAUR DOMAIN-CONTAINING PROTEIN 8"/>
    <property type="match status" value="1"/>
</dbReference>
<dbReference type="PANTHER" id="PTHR20914:SF30">
    <property type="entry name" value="LY6_PLAUR DOMAIN CONTAINING 9"/>
    <property type="match status" value="1"/>
</dbReference>
<dbReference type="Pfam" id="PF02988">
    <property type="entry name" value="PLA2_inh"/>
    <property type="match status" value="1"/>
</dbReference>
<dbReference type="Pfam" id="PF00021">
    <property type="entry name" value="UPAR_LY6"/>
    <property type="match status" value="1"/>
</dbReference>
<dbReference type="PIRSF" id="PIRSF002023">
    <property type="entry name" value="PLA2_inhib_alpha/gamma"/>
    <property type="match status" value="1"/>
</dbReference>
<dbReference type="SMART" id="SM00134">
    <property type="entry name" value="LU"/>
    <property type="match status" value="1"/>
</dbReference>
<dbReference type="SUPFAM" id="SSF57302">
    <property type="entry name" value="Snake toxin-like"/>
    <property type="match status" value="1"/>
</dbReference>
<evidence type="ECO:0000269" key="1">
    <source>
    </source>
</evidence>
<evidence type="ECO:0000305" key="2"/>
<proteinExistence type="evidence at protein level"/>
<feature type="chain" id="PRO_0000215266" description="Phospholipase A2 inhibitor 31 kDa subunit" evidence="1">
    <location>
        <begin position="1"/>
        <end position="188"/>
    </location>
</feature>
<feature type="glycosylation site" description="N-linked (GlcNAc...) asparagine" evidence="1">
    <location>
        <position position="157"/>
    </location>
</feature>
<feature type="disulfide bond" evidence="1">
    <location>
        <begin position="3"/>
        <end position="27"/>
    </location>
</feature>
<feature type="disulfide bond" evidence="1">
    <location>
        <begin position="6"/>
        <end position="13"/>
    </location>
</feature>
<feature type="disulfide bond" evidence="1">
    <location>
        <begin position="20"/>
        <end position="48"/>
    </location>
</feature>
<feature type="disulfide bond" evidence="1">
    <location>
        <begin position="54"/>
        <end position="75"/>
    </location>
</feature>
<feature type="disulfide bond" evidence="1">
    <location>
        <begin position="76"/>
        <end position="81"/>
    </location>
</feature>
<feature type="disulfide bond" evidence="1">
    <location>
        <begin position="99"/>
        <end position="124"/>
    </location>
</feature>
<feature type="disulfide bond" evidence="1">
    <location>
        <begin position="117"/>
        <end position="146"/>
    </location>
</feature>
<feature type="disulfide bond" evidence="1">
    <location>
        <begin position="150"/>
        <end position="172"/>
    </location>
</feature>
<protein>
    <recommendedName>
        <fullName>Phospholipase A2 inhibitor 31 kDa subunit</fullName>
    </recommendedName>
    <alternativeName>
        <fullName>gamma-PLI</fullName>
    </alternativeName>
</protein>
<accession>Q7LZI1</accession>
<comment type="function">
    <text>Inhibits the enzymatic activity of phospholipase A2.</text>
</comment>
<comment type="subunit">
    <text evidence="1">Heterodimer with phospholipase A2 inhibitor 25 kDa.</text>
</comment>
<comment type="subcellular location">
    <subcellularLocation>
        <location evidence="1">Secreted</location>
    </subcellularLocation>
    <text evidence="1">Secreted in blood plasma.</text>
</comment>
<comment type="tissue specificity">
    <text evidence="2">Expressed by the liver.</text>
</comment>
<comment type="PTM">
    <text evidence="1">N-glycosylated.</text>
</comment>
<comment type="similarity">
    <text evidence="2">Belongs to the CNF-like-inhibitor family.</text>
</comment>
<keyword id="KW-0903">Direct protein sequencing</keyword>
<keyword id="KW-1015">Disulfide bond</keyword>
<keyword id="KW-0325">Glycoprotein</keyword>
<keyword id="KW-0593">Phospholipase A2 inhibitor</keyword>
<keyword id="KW-0964">Secreted</keyword>
<reference key="1">
    <citation type="journal article" date="1994" name="Biochem. Biophys. Res. Commun.">
        <title>The two subunits of a phospholipase A2 inhibitor from the plasma of thailand cobra having structural similarity to urokinase-type plasminogen activator receptor and Ly-6 related proteins.</title>
        <authorList>
            <person name="Ohkura N."/>
            <person name="Inoue S."/>
            <person name="Ikeda K."/>
            <person name="Hayashi K."/>
        </authorList>
    </citation>
    <scope>PROTEIN SEQUENCE</scope>
    <scope>DISULFIDE BONDS</scope>
    <scope>GLYCOSYLATION AT ASN-157</scope>
    <scope>SUBCELLULAR LOCATION</scope>
    <scope>SUBUNIT</scope>
    <source>
        <tissue>Plasma</tissue>
    </source>
</reference>
<organism>
    <name type="scientific">Naja kaouthia</name>
    <name type="common">Monocled cobra</name>
    <name type="synonym">Naja siamensis</name>
    <dbReference type="NCBI Taxonomy" id="8649"/>
    <lineage>
        <taxon>Eukaryota</taxon>
        <taxon>Metazoa</taxon>
        <taxon>Chordata</taxon>
        <taxon>Craniata</taxon>
        <taxon>Vertebrata</taxon>
        <taxon>Euteleostomi</taxon>
        <taxon>Lepidosauria</taxon>
        <taxon>Squamata</taxon>
        <taxon>Bifurcata</taxon>
        <taxon>Unidentata</taxon>
        <taxon>Episquamata</taxon>
        <taxon>Toxicofera</taxon>
        <taxon>Serpentes</taxon>
        <taxon>Colubroidea</taxon>
        <taxon>Elapidae</taxon>
        <taxon>Elapinae</taxon>
        <taxon>Naja</taxon>
    </lineage>
</organism>
<sequence length="188" mass="20452">HSCEICHNVGKSCEGSVEPCTSPEDQCGTVVLEFSPAPVSFRSIHKNCFSSSLCKLGSFDVNVGQNTYVRGRIQCCDEERCEEPQFSGHCASHPNGYYCPGIFGLFSLDSSANEAVCKGTETKCINIAGYRKEMYPGDIAYNIKGCISSCPELSLSNRTHEVDRNELIKVECTDAVKIPPSECQSSGI</sequence>
<name>PLIGB_NAJKA</name>